<feature type="chain" id="PRO_1000057283" description="Phospho-N-acetylmuramoyl-pentapeptide-transferase">
    <location>
        <begin position="1"/>
        <end position="360"/>
    </location>
</feature>
<feature type="transmembrane region" description="Helical" evidence="1">
    <location>
        <begin position="25"/>
        <end position="45"/>
    </location>
</feature>
<feature type="transmembrane region" description="Helical" evidence="1">
    <location>
        <begin position="73"/>
        <end position="93"/>
    </location>
</feature>
<feature type="transmembrane region" description="Helical" evidence="1">
    <location>
        <begin position="97"/>
        <end position="117"/>
    </location>
</feature>
<feature type="transmembrane region" description="Helical" evidence="1">
    <location>
        <begin position="132"/>
        <end position="152"/>
    </location>
</feature>
<feature type="transmembrane region" description="Helical" evidence="1">
    <location>
        <begin position="168"/>
        <end position="188"/>
    </location>
</feature>
<feature type="transmembrane region" description="Helical" evidence="1">
    <location>
        <begin position="199"/>
        <end position="219"/>
    </location>
</feature>
<feature type="transmembrane region" description="Helical" evidence="1">
    <location>
        <begin position="236"/>
        <end position="256"/>
    </location>
</feature>
<feature type="transmembrane region" description="Helical" evidence="1">
    <location>
        <begin position="263"/>
        <end position="283"/>
    </location>
</feature>
<feature type="transmembrane region" description="Helical" evidence="1">
    <location>
        <begin position="288"/>
        <end position="308"/>
    </location>
</feature>
<feature type="transmembrane region" description="Helical" evidence="1">
    <location>
        <begin position="338"/>
        <end position="358"/>
    </location>
</feature>
<accession>A4XQS1</accession>
<name>MRAY_ECTM1</name>
<sequence length="360" mass="39356">MLLLLAEYLQQFHKGFAVFQYLTLRGILGVLTALALSLWLGPWMIRTLQVRQIGQAVRNDGPQSHLSKKGTPTMGGALILTAIAVSTLLWADLSNRYVWVVLAVTLLFGAIGWVDDYRKVIEKNSRGLPSRWKYFWQSVFGLAAAIFLYMTAQSPVETTLILPLLKDVSIPLGIGFVVLTYFVIVGSSNAVNLTDGLDGLAILPTVMVAGALAVFCYLSGNVNFAEYLLIPYVPGAGELIVFCAALVGAGLGFLWFNTYPAQVFMGDVGALALGAALGTIAVIVRQEVVLFIMGGVFVMETLSVIIQVASFKLTGKRVFRMAPIHHHFELKGWPEPRVIVRFWIITVILVLIGLATLKLR</sequence>
<organism>
    <name type="scientific">Ectopseudomonas mendocina (strain ymp)</name>
    <name type="common">Pseudomonas mendocina</name>
    <dbReference type="NCBI Taxonomy" id="399739"/>
    <lineage>
        <taxon>Bacteria</taxon>
        <taxon>Pseudomonadati</taxon>
        <taxon>Pseudomonadota</taxon>
        <taxon>Gammaproteobacteria</taxon>
        <taxon>Pseudomonadales</taxon>
        <taxon>Pseudomonadaceae</taxon>
        <taxon>Ectopseudomonas</taxon>
    </lineage>
</organism>
<comment type="function">
    <text evidence="1">Catalyzes the initial step of the lipid cycle reactions in the biosynthesis of the cell wall peptidoglycan: transfers peptidoglycan precursor phospho-MurNAc-pentapeptide from UDP-MurNAc-pentapeptide onto the lipid carrier undecaprenyl phosphate, yielding undecaprenyl-pyrophosphoryl-MurNAc-pentapeptide, known as lipid I.</text>
</comment>
<comment type="catalytic activity">
    <reaction evidence="1">
        <text>UDP-N-acetyl-alpha-D-muramoyl-L-alanyl-gamma-D-glutamyl-meso-2,6-diaminopimeloyl-D-alanyl-D-alanine + di-trans,octa-cis-undecaprenyl phosphate = di-trans,octa-cis-undecaprenyl diphospho-N-acetyl-alpha-D-muramoyl-L-alanyl-D-glutamyl-meso-2,6-diaminopimeloyl-D-alanyl-D-alanine + UMP</text>
        <dbReference type="Rhea" id="RHEA:28386"/>
        <dbReference type="ChEBI" id="CHEBI:57865"/>
        <dbReference type="ChEBI" id="CHEBI:60392"/>
        <dbReference type="ChEBI" id="CHEBI:61386"/>
        <dbReference type="ChEBI" id="CHEBI:61387"/>
        <dbReference type="EC" id="2.7.8.13"/>
    </reaction>
</comment>
<comment type="cofactor">
    <cofactor evidence="1">
        <name>Mg(2+)</name>
        <dbReference type="ChEBI" id="CHEBI:18420"/>
    </cofactor>
</comment>
<comment type="pathway">
    <text evidence="1">Cell wall biogenesis; peptidoglycan biosynthesis.</text>
</comment>
<comment type="subcellular location">
    <subcellularLocation>
        <location evidence="1">Cell inner membrane</location>
        <topology evidence="1">Multi-pass membrane protein</topology>
    </subcellularLocation>
</comment>
<comment type="similarity">
    <text evidence="1">Belongs to the glycosyltransferase 4 family. MraY subfamily.</text>
</comment>
<keyword id="KW-0131">Cell cycle</keyword>
<keyword id="KW-0132">Cell division</keyword>
<keyword id="KW-0997">Cell inner membrane</keyword>
<keyword id="KW-1003">Cell membrane</keyword>
<keyword id="KW-0133">Cell shape</keyword>
<keyword id="KW-0961">Cell wall biogenesis/degradation</keyword>
<keyword id="KW-0460">Magnesium</keyword>
<keyword id="KW-0472">Membrane</keyword>
<keyword id="KW-0479">Metal-binding</keyword>
<keyword id="KW-0573">Peptidoglycan synthesis</keyword>
<keyword id="KW-0808">Transferase</keyword>
<keyword id="KW-0812">Transmembrane</keyword>
<keyword id="KW-1133">Transmembrane helix</keyword>
<proteinExistence type="inferred from homology"/>
<gene>
    <name evidence="1" type="primary">mraY</name>
    <name type="ordered locus">Pmen_0919</name>
</gene>
<evidence type="ECO:0000255" key="1">
    <source>
        <dbReference type="HAMAP-Rule" id="MF_00038"/>
    </source>
</evidence>
<protein>
    <recommendedName>
        <fullName evidence="1">Phospho-N-acetylmuramoyl-pentapeptide-transferase</fullName>
        <ecNumber evidence="1">2.7.8.13</ecNumber>
    </recommendedName>
    <alternativeName>
        <fullName evidence="1">UDP-MurNAc-pentapeptide phosphotransferase</fullName>
    </alternativeName>
</protein>
<reference key="1">
    <citation type="submission" date="2007-04" db="EMBL/GenBank/DDBJ databases">
        <title>Complete sequence of Pseudomonas mendocina ymp.</title>
        <authorList>
            <consortium name="US DOE Joint Genome Institute"/>
            <person name="Copeland A."/>
            <person name="Lucas S."/>
            <person name="Lapidus A."/>
            <person name="Barry K."/>
            <person name="Glavina del Rio T."/>
            <person name="Dalin E."/>
            <person name="Tice H."/>
            <person name="Pitluck S."/>
            <person name="Kiss H."/>
            <person name="Brettin T."/>
            <person name="Detter J.C."/>
            <person name="Bruce D."/>
            <person name="Han C."/>
            <person name="Schmutz J."/>
            <person name="Larimer F."/>
            <person name="Land M."/>
            <person name="Hauser L."/>
            <person name="Kyrpides N."/>
            <person name="Mikhailova N."/>
            <person name="Hersman L."/>
            <person name="Dubois J."/>
            <person name="Maurice P."/>
            <person name="Richardson P."/>
        </authorList>
    </citation>
    <scope>NUCLEOTIDE SEQUENCE [LARGE SCALE GENOMIC DNA]</scope>
    <source>
        <strain>ymp</strain>
    </source>
</reference>
<dbReference type="EC" id="2.7.8.13" evidence="1"/>
<dbReference type="EMBL" id="CP000680">
    <property type="protein sequence ID" value="ABP83687.1"/>
    <property type="molecule type" value="Genomic_DNA"/>
</dbReference>
<dbReference type="SMR" id="A4XQS1"/>
<dbReference type="STRING" id="399739.Pmen_0919"/>
<dbReference type="KEGG" id="pmy:Pmen_0919"/>
<dbReference type="PATRIC" id="fig|399739.8.peg.928"/>
<dbReference type="eggNOG" id="COG0472">
    <property type="taxonomic scope" value="Bacteria"/>
</dbReference>
<dbReference type="HOGENOM" id="CLU_023982_0_0_6"/>
<dbReference type="OrthoDB" id="9805475at2"/>
<dbReference type="UniPathway" id="UPA00219"/>
<dbReference type="GO" id="GO:0005886">
    <property type="term" value="C:plasma membrane"/>
    <property type="evidence" value="ECO:0007669"/>
    <property type="project" value="UniProtKB-SubCell"/>
</dbReference>
<dbReference type="GO" id="GO:0046872">
    <property type="term" value="F:metal ion binding"/>
    <property type="evidence" value="ECO:0007669"/>
    <property type="project" value="UniProtKB-KW"/>
</dbReference>
<dbReference type="GO" id="GO:0008963">
    <property type="term" value="F:phospho-N-acetylmuramoyl-pentapeptide-transferase activity"/>
    <property type="evidence" value="ECO:0007669"/>
    <property type="project" value="UniProtKB-UniRule"/>
</dbReference>
<dbReference type="GO" id="GO:0051992">
    <property type="term" value="F:UDP-N-acetylmuramoyl-L-alanyl-D-glutamyl-meso-2,6-diaminopimelyl-D-alanyl-D-alanine:undecaprenyl-phosphate transferase activity"/>
    <property type="evidence" value="ECO:0007669"/>
    <property type="project" value="RHEA"/>
</dbReference>
<dbReference type="GO" id="GO:0051301">
    <property type="term" value="P:cell division"/>
    <property type="evidence" value="ECO:0007669"/>
    <property type="project" value="UniProtKB-KW"/>
</dbReference>
<dbReference type="GO" id="GO:0071555">
    <property type="term" value="P:cell wall organization"/>
    <property type="evidence" value="ECO:0007669"/>
    <property type="project" value="UniProtKB-KW"/>
</dbReference>
<dbReference type="GO" id="GO:0009252">
    <property type="term" value="P:peptidoglycan biosynthetic process"/>
    <property type="evidence" value="ECO:0007669"/>
    <property type="project" value="UniProtKB-UniRule"/>
</dbReference>
<dbReference type="GO" id="GO:0008360">
    <property type="term" value="P:regulation of cell shape"/>
    <property type="evidence" value="ECO:0007669"/>
    <property type="project" value="UniProtKB-KW"/>
</dbReference>
<dbReference type="CDD" id="cd06852">
    <property type="entry name" value="GT_MraY"/>
    <property type="match status" value="1"/>
</dbReference>
<dbReference type="HAMAP" id="MF_00038">
    <property type="entry name" value="MraY"/>
    <property type="match status" value="1"/>
</dbReference>
<dbReference type="InterPro" id="IPR000715">
    <property type="entry name" value="Glycosyl_transferase_4"/>
</dbReference>
<dbReference type="InterPro" id="IPR003524">
    <property type="entry name" value="PNAcMuramoyl-5peptid_Trfase"/>
</dbReference>
<dbReference type="InterPro" id="IPR018480">
    <property type="entry name" value="PNAcMuramoyl-5peptid_Trfase_CS"/>
</dbReference>
<dbReference type="NCBIfam" id="TIGR00445">
    <property type="entry name" value="mraY"/>
    <property type="match status" value="1"/>
</dbReference>
<dbReference type="PANTHER" id="PTHR22926">
    <property type="entry name" value="PHOSPHO-N-ACETYLMURAMOYL-PENTAPEPTIDE-TRANSFERASE"/>
    <property type="match status" value="1"/>
</dbReference>
<dbReference type="PANTHER" id="PTHR22926:SF5">
    <property type="entry name" value="PHOSPHO-N-ACETYLMURAMOYL-PENTAPEPTIDE-TRANSFERASE HOMOLOG"/>
    <property type="match status" value="1"/>
</dbReference>
<dbReference type="Pfam" id="PF00953">
    <property type="entry name" value="Glycos_transf_4"/>
    <property type="match status" value="1"/>
</dbReference>
<dbReference type="PROSITE" id="PS01347">
    <property type="entry name" value="MRAY_1"/>
    <property type="match status" value="1"/>
</dbReference>
<dbReference type="PROSITE" id="PS01348">
    <property type="entry name" value="MRAY_2"/>
    <property type="match status" value="1"/>
</dbReference>